<reference key="1">
    <citation type="submission" date="2007-03" db="EMBL/GenBank/DDBJ databases">
        <title>Annotation of Culex pipiens quinquefasciatus.</title>
        <authorList>
            <consortium name="The Broad Institute Genome Sequencing Platform"/>
            <person name="Atkinson P.W."/>
            <person name="Hemingway J."/>
            <person name="Christensen B.M."/>
            <person name="Higgs S."/>
            <person name="Kodira C.D."/>
            <person name="Hannick L.I."/>
            <person name="Megy K."/>
            <person name="O'Leary S.B."/>
            <person name="Pearson M."/>
            <person name="Haas B.J."/>
            <person name="Mauceli E."/>
            <person name="Wortman J.R."/>
            <person name="Lee N.H."/>
            <person name="Guigo R."/>
            <person name="Stanke M."/>
            <person name="Alvarado L."/>
            <person name="Amedeo P."/>
            <person name="Antoine C.H."/>
            <person name="Arensburger P."/>
            <person name="Bidwell S.L."/>
            <person name="Crawford M."/>
            <person name="Camaro F."/>
            <person name="Devon K."/>
            <person name="Engels R."/>
            <person name="Hammond M."/>
            <person name="Howarth C."/>
            <person name="Koehrsen M."/>
            <person name="Lawson D."/>
            <person name="Montgomery P."/>
            <person name="Nene V."/>
            <person name="Nusbaum C."/>
            <person name="Puiu D."/>
            <person name="Romero-Severson J."/>
            <person name="Severson D.W."/>
            <person name="Shumway M."/>
            <person name="Sisk P."/>
            <person name="Stolte C."/>
            <person name="Zeng Q."/>
            <person name="Eisenstadt E."/>
            <person name="Fraser-Liggett C.M."/>
            <person name="Strausberg R."/>
            <person name="Galagan J."/>
            <person name="Birren B."/>
            <person name="Collins F.H."/>
        </authorList>
    </citation>
    <scope>NUCLEOTIDE SEQUENCE [LARGE SCALE GENOMIC DNA]</scope>
    <source>
        <strain>JHB</strain>
    </source>
</reference>
<accession>B0WV73</accession>
<keyword id="KW-0067">ATP-binding</keyword>
<keyword id="KW-0436">Ligase</keyword>
<keyword id="KW-0496">Mitochondrion</keyword>
<keyword id="KW-0547">Nucleotide-binding</keyword>
<keyword id="KW-0648">Protein biosynthesis</keyword>
<keyword id="KW-1185">Reference proteome</keyword>
<comment type="function">
    <text evidence="1">Allows the formation of correctly charged Gln-tRNA(Gln) through the transamidation of misacylated Glu-tRNA(Gln) in the mitochondria. The reaction takes place in the presence of glutamine and ATP through an activated gamma-phospho-Glu-tRNA(Gln).</text>
</comment>
<comment type="catalytic activity">
    <reaction evidence="1">
        <text>L-glutamyl-tRNA(Gln) + L-glutamine + ATP + H2O = L-glutaminyl-tRNA(Gln) + L-glutamate + ADP + phosphate + H(+)</text>
        <dbReference type="Rhea" id="RHEA:17521"/>
        <dbReference type="Rhea" id="RHEA-COMP:9681"/>
        <dbReference type="Rhea" id="RHEA-COMP:9684"/>
        <dbReference type="ChEBI" id="CHEBI:15377"/>
        <dbReference type="ChEBI" id="CHEBI:15378"/>
        <dbReference type="ChEBI" id="CHEBI:29985"/>
        <dbReference type="ChEBI" id="CHEBI:30616"/>
        <dbReference type="ChEBI" id="CHEBI:43474"/>
        <dbReference type="ChEBI" id="CHEBI:58359"/>
        <dbReference type="ChEBI" id="CHEBI:78520"/>
        <dbReference type="ChEBI" id="CHEBI:78521"/>
        <dbReference type="ChEBI" id="CHEBI:456216"/>
    </reaction>
</comment>
<comment type="subunit">
    <text evidence="1">Subunit of the heterotrimeric GatCAB amidotransferase (AdT) complex, composed of A, B and C subunits.</text>
</comment>
<comment type="subcellular location">
    <subcellularLocation>
        <location evidence="1">Mitochondrion</location>
    </subcellularLocation>
</comment>
<comment type="miscellaneous">
    <text evidence="1">This protein may be expected to contain an N-terminal transit peptide but none has been predicted.</text>
</comment>
<comment type="similarity">
    <text evidence="1">Belongs to the GatC family.</text>
</comment>
<evidence type="ECO:0000255" key="1">
    <source>
        <dbReference type="HAMAP-Rule" id="MF_03149"/>
    </source>
</evidence>
<evidence type="ECO:0000256" key="2">
    <source>
        <dbReference type="SAM" id="MobiDB-lite"/>
    </source>
</evidence>
<dbReference type="EC" id="6.3.5.-" evidence="1"/>
<dbReference type="EMBL" id="DS232119">
    <property type="protein sequence ID" value="EDS35412.1"/>
    <property type="molecule type" value="Genomic_DNA"/>
</dbReference>
<dbReference type="RefSeq" id="XP_001861295.1">
    <property type="nucleotide sequence ID" value="XM_001861260.1"/>
</dbReference>
<dbReference type="SMR" id="B0WV73"/>
<dbReference type="FunCoup" id="B0WV73">
    <property type="interactions" value="1123"/>
</dbReference>
<dbReference type="STRING" id="7176.B0WV73"/>
<dbReference type="EnsemblMetazoa" id="CPIJ011029-RA">
    <property type="protein sequence ID" value="CPIJ011029-PA"/>
    <property type="gene ID" value="CPIJ011029"/>
</dbReference>
<dbReference type="KEGG" id="cqu:CpipJ_CPIJ011029"/>
<dbReference type="VEuPathDB" id="VectorBase:CPIJ011029"/>
<dbReference type="VEuPathDB" id="VectorBase:CQUJHB007471"/>
<dbReference type="eggNOG" id="KOG4247">
    <property type="taxonomic scope" value="Eukaryota"/>
</dbReference>
<dbReference type="HOGENOM" id="CLU_105899_0_1_1"/>
<dbReference type="InParanoid" id="B0WV73"/>
<dbReference type="OMA" id="MIGIPFH"/>
<dbReference type="OrthoDB" id="5394539at2759"/>
<dbReference type="PhylomeDB" id="B0WV73"/>
<dbReference type="Proteomes" id="UP000002320">
    <property type="component" value="Unassembled WGS sequence"/>
</dbReference>
<dbReference type="GO" id="GO:0030956">
    <property type="term" value="C:glutamyl-tRNA(Gln) amidotransferase complex"/>
    <property type="evidence" value="ECO:0007669"/>
    <property type="project" value="UniProtKB-UniRule"/>
</dbReference>
<dbReference type="GO" id="GO:0005739">
    <property type="term" value="C:mitochondrion"/>
    <property type="evidence" value="ECO:0007669"/>
    <property type="project" value="UniProtKB-SubCell"/>
</dbReference>
<dbReference type="GO" id="GO:0005524">
    <property type="term" value="F:ATP binding"/>
    <property type="evidence" value="ECO:0007669"/>
    <property type="project" value="UniProtKB-KW"/>
</dbReference>
<dbReference type="GO" id="GO:0050567">
    <property type="term" value="F:glutaminyl-tRNA synthase (glutamine-hydrolyzing) activity"/>
    <property type="evidence" value="ECO:0007669"/>
    <property type="project" value="UniProtKB-UniRule"/>
</dbReference>
<dbReference type="GO" id="GO:0070681">
    <property type="term" value="P:glutaminyl-tRNAGln biosynthesis via transamidation"/>
    <property type="evidence" value="ECO:0007669"/>
    <property type="project" value="UniProtKB-UniRule"/>
</dbReference>
<dbReference type="GO" id="GO:0032543">
    <property type="term" value="P:mitochondrial translation"/>
    <property type="evidence" value="ECO:0007669"/>
    <property type="project" value="UniProtKB-UniRule"/>
</dbReference>
<dbReference type="GO" id="GO:0006450">
    <property type="term" value="P:regulation of translational fidelity"/>
    <property type="evidence" value="ECO:0007669"/>
    <property type="project" value="InterPro"/>
</dbReference>
<dbReference type="HAMAP" id="MF_00122">
    <property type="entry name" value="GatC"/>
    <property type="match status" value="1"/>
</dbReference>
<dbReference type="InterPro" id="IPR036113">
    <property type="entry name" value="Asp/Glu-ADT_sf_sub_c"/>
</dbReference>
<dbReference type="InterPro" id="IPR003837">
    <property type="entry name" value="GatC"/>
</dbReference>
<dbReference type="NCBIfam" id="TIGR00135">
    <property type="entry name" value="gatC"/>
    <property type="match status" value="1"/>
</dbReference>
<dbReference type="PANTHER" id="PTHR15004">
    <property type="entry name" value="GLUTAMYL-TRNA(GLN) AMIDOTRANSFERASE SUBUNIT C, MITOCHONDRIAL"/>
    <property type="match status" value="1"/>
</dbReference>
<dbReference type="PANTHER" id="PTHR15004:SF0">
    <property type="entry name" value="GLUTAMYL-TRNA(GLN) AMIDOTRANSFERASE SUBUNIT C, MITOCHONDRIAL"/>
    <property type="match status" value="1"/>
</dbReference>
<dbReference type="Pfam" id="PF02686">
    <property type="entry name" value="GatC"/>
    <property type="match status" value="1"/>
</dbReference>
<dbReference type="SUPFAM" id="SSF141000">
    <property type="entry name" value="Glu-tRNAGln amidotransferase C subunit"/>
    <property type="match status" value="1"/>
</dbReference>
<organism>
    <name type="scientific">Culex quinquefasciatus</name>
    <name type="common">Southern house mosquito</name>
    <name type="synonym">Culex pungens</name>
    <dbReference type="NCBI Taxonomy" id="7176"/>
    <lineage>
        <taxon>Eukaryota</taxon>
        <taxon>Metazoa</taxon>
        <taxon>Ecdysozoa</taxon>
        <taxon>Arthropoda</taxon>
        <taxon>Hexapoda</taxon>
        <taxon>Insecta</taxon>
        <taxon>Pterygota</taxon>
        <taxon>Neoptera</taxon>
        <taxon>Endopterygota</taxon>
        <taxon>Diptera</taxon>
        <taxon>Nematocera</taxon>
        <taxon>Culicoidea</taxon>
        <taxon>Culicidae</taxon>
        <taxon>Culicinae</taxon>
        <taxon>Culicini</taxon>
        <taxon>Culex</taxon>
        <taxon>Culex</taxon>
    </lineage>
</organism>
<name>GATC3_CULQU</name>
<protein>
    <recommendedName>
        <fullName>Glutamyl-tRNA(Gln) amidotransferase subunit C-3, mitochondrial</fullName>
        <shortName evidence="1">Glu-AdT subunit C-3</shortName>
        <ecNumber evidence="1">6.3.5.-</ecNumber>
    </recommendedName>
</protein>
<sequence>MIGIPFHLRPPPGRTLHSLVRTIASTKPADLSGTQDKSTRQKINFHELKHPSKVPQRPNKSTIDGQSTPTRIPVDTQTVQLLERLSLVDLDSAEAHRTLEDAIEFASQILSVDTDGVEPLNTVLERERLTLREDRVSDGKIQQDVLRNACVTEEENFVAPPGNIPLEQEPRK</sequence>
<proteinExistence type="inferred from homology"/>
<gene>
    <name type="ORF">CPIJ011029</name>
</gene>
<feature type="chain" id="PRO_0000413299" description="Glutamyl-tRNA(Gln) amidotransferase subunit C-3, mitochondrial">
    <location>
        <begin position="1"/>
        <end position="172"/>
    </location>
</feature>
<feature type="region of interest" description="Disordered" evidence="2">
    <location>
        <begin position="49"/>
        <end position="71"/>
    </location>
</feature>
<feature type="compositionally biased region" description="Polar residues" evidence="2">
    <location>
        <begin position="58"/>
        <end position="71"/>
    </location>
</feature>